<feature type="signal peptide" evidence="1">
    <location>
        <begin position="1"/>
        <end position="19"/>
    </location>
</feature>
<feature type="chain" id="PRO_0000416240" description="Fibronectin type III domain-containing protein 10">
    <location>
        <begin position="20"/>
        <end position="225"/>
    </location>
</feature>
<feature type="topological domain" description="Extracellular" evidence="1">
    <location>
        <begin position="20"/>
        <end position="181"/>
    </location>
</feature>
<feature type="transmembrane region" description="Helical" evidence="1">
    <location>
        <begin position="182"/>
        <end position="202"/>
    </location>
</feature>
<feature type="topological domain" description="Cytoplasmic" evidence="1">
    <location>
        <begin position="203"/>
        <end position="225"/>
    </location>
</feature>
<feature type="domain" description="Fibronectin type-III">
    <location>
        <begin position="72"/>
        <end position="167"/>
    </location>
</feature>
<feature type="glycosylation site" description="N-linked (GlcNAc...) asparagine" evidence="1">
    <location>
        <position position="86"/>
    </location>
</feature>
<feature type="glycosylation site" description="N-linked (GlcNAc...) asparagine" evidence="1">
    <location>
        <position position="109"/>
    </location>
</feature>
<dbReference type="EMBL" id="AABR03046654">
    <property type="status" value="NOT_ANNOTATED_CDS"/>
    <property type="molecule type" value="Genomic_DNA"/>
</dbReference>
<dbReference type="RefSeq" id="NP_001406608.1">
    <property type="nucleotide sequence ID" value="NM_001419679.1"/>
</dbReference>
<dbReference type="RefSeq" id="XP_001058198.1">
    <property type="nucleotide sequence ID" value="XM_001058198.6"/>
</dbReference>
<dbReference type="RefSeq" id="XP_006225700.1">
    <property type="nucleotide sequence ID" value="XM_006225638.1"/>
</dbReference>
<dbReference type="RefSeq" id="XP_063144463.1">
    <property type="nucleotide sequence ID" value="XM_063288393.1"/>
</dbReference>
<dbReference type="FunCoup" id="D4A2Q0">
    <property type="interactions" value="563"/>
</dbReference>
<dbReference type="GlyCosmos" id="D4A2Q0">
    <property type="glycosylation" value="2 sites, No reported glycans"/>
</dbReference>
<dbReference type="GlyGen" id="D4A2Q0">
    <property type="glycosylation" value="3 sites"/>
</dbReference>
<dbReference type="PhosphoSitePlus" id="D4A2Q0"/>
<dbReference type="PaxDb" id="10116-ENSRNOP00000059426"/>
<dbReference type="Ensembl" id="ENSRNOT00000041753.6">
    <property type="protein sequence ID" value="ENSRNOP00000051016.4"/>
    <property type="gene ID" value="ENSRNOG00000030447.6"/>
</dbReference>
<dbReference type="GeneID" id="680656"/>
<dbReference type="AGR" id="RGD:1589420"/>
<dbReference type="RGD" id="1589420">
    <property type="gene designation" value="Fndc10"/>
</dbReference>
<dbReference type="eggNOG" id="ENOG502S019">
    <property type="taxonomic scope" value="Eukaryota"/>
</dbReference>
<dbReference type="GeneTree" id="ENSGT00550000076432"/>
<dbReference type="InParanoid" id="D4A2Q0"/>
<dbReference type="OMA" id="YTRFPCD"/>
<dbReference type="OrthoDB" id="9450734at2759"/>
<dbReference type="TreeFam" id="TF332961"/>
<dbReference type="PRO" id="PR:D4A2Q0"/>
<dbReference type="Proteomes" id="UP000002494">
    <property type="component" value="Chromosome 5"/>
</dbReference>
<dbReference type="GO" id="GO:0016020">
    <property type="term" value="C:membrane"/>
    <property type="evidence" value="ECO:0007669"/>
    <property type="project" value="UniProtKB-SubCell"/>
</dbReference>
<dbReference type="InterPro" id="IPR034446">
    <property type="entry name" value="Fndc10"/>
</dbReference>
<dbReference type="PANTHER" id="PTHR39233">
    <property type="entry name" value="FIBRONECTIN TYPE III DOMAIN-CONTAINING PROTEIN 10"/>
    <property type="match status" value="1"/>
</dbReference>
<dbReference type="PANTHER" id="PTHR39233:SF1">
    <property type="entry name" value="FIBRONECTIN TYPE III DOMAIN-CONTAINING PROTEIN 10"/>
    <property type="match status" value="1"/>
</dbReference>
<dbReference type="Pfam" id="PF17742">
    <property type="entry name" value="Fndc10"/>
    <property type="match status" value="1"/>
</dbReference>
<reference key="1">
    <citation type="journal article" date="2004" name="Nature">
        <title>Genome sequence of the Brown Norway rat yields insights into mammalian evolution.</title>
        <authorList>
            <person name="Gibbs R.A."/>
            <person name="Weinstock G.M."/>
            <person name="Metzker M.L."/>
            <person name="Muzny D.M."/>
            <person name="Sodergren E.J."/>
            <person name="Scherer S."/>
            <person name="Scott G."/>
            <person name="Steffen D."/>
            <person name="Worley K.C."/>
            <person name="Burch P.E."/>
            <person name="Okwuonu G."/>
            <person name="Hines S."/>
            <person name="Lewis L."/>
            <person name="Deramo C."/>
            <person name="Delgado O."/>
            <person name="Dugan-Rocha S."/>
            <person name="Miner G."/>
            <person name="Morgan M."/>
            <person name="Hawes A."/>
            <person name="Gill R."/>
            <person name="Holt R.A."/>
            <person name="Adams M.D."/>
            <person name="Amanatides P.G."/>
            <person name="Baden-Tillson H."/>
            <person name="Barnstead M."/>
            <person name="Chin S."/>
            <person name="Evans C.A."/>
            <person name="Ferriera S."/>
            <person name="Fosler C."/>
            <person name="Glodek A."/>
            <person name="Gu Z."/>
            <person name="Jennings D."/>
            <person name="Kraft C.L."/>
            <person name="Nguyen T."/>
            <person name="Pfannkoch C.M."/>
            <person name="Sitter C."/>
            <person name="Sutton G.G."/>
            <person name="Venter J.C."/>
            <person name="Woodage T."/>
            <person name="Smith D."/>
            <person name="Lee H.-M."/>
            <person name="Gustafson E."/>
            <person name="Cahill P."/>
            <person name="Kana A."/>
            <person name="Doucette-Stamm L."/>
            <person name="Weinstock K."/>
            <person name="Fechtel K."/>
            <person name="Weiss R.B."/>
            <person name="Dunn D.M."/>
            <person name="Green E.D."/>
            <person name="Blakesley R.W."/>
            <person name="Bouffard G.G."/>
            <person name="De Jong P.J."/>
            <person name="Osoegawa K."/>
            <person name="Zhu B."/>
            <person name="Marra M."/>
            <person name="Schein J."/>
            <person name="Bosdet I."/>
            <person name="Fjell C."/>
            <person name="Jones S."/>
            <person name="Krzywinski M."/>
            <person name="Mathewson C."/>
            <person name="Siddiqui A."/>
            <person name="Wye N."/>
            <person name="McPherson J."/>
            <person name="Zhao S."/>
            <person name="Fraser C.M."/>
            <person name="Shetty J."/>
            <person name="Shatsman S."/>
            <person name="Geer K."/>
            <person name="Chen Y."/>
            <person name="Abramzon S."/>
            <person name="Nierman W.C."/>
            <person name="Havlak P.H."/>
            <person name="Chen R."/>
            <person name="Durbin K.J."/>
            <person name="Egan A."/>
            <person name="Ren Y."/>
            <person name="Song X.-Z."/>
            <person name="Li B."/>
            <person name="Liu Y."/>
            <person name="Qin X."/>
            <person name="Cawley S."/>
            <person name="Cooney A.J."/>
            <person name="D'Souza L.M."/>
            <person name="Martin K."/>
            <person name="Wu J.Q."/>
            <person name="Gonzalez-Garay M.L."/>
            <person name="Jackson A.R."/>
            <person name="Kalafus K.J."/>
            <person name="McLeod M.P."/>
            <person name="Milosavljevic A."/>
            <person name="Virk D."/>
            <person name="Volkov A."/>
            <person name="Wheeler D.A."/>
            <person name="Zhang Z."/>
            <person name="Bailey J.A."/>
            <person name="Eichler E.E."/>
            <person name="Tuzun E."/>
            <person name="Birney E."/>
            <person name="Mongin E."/>
            <person name="Ureta-Vidal A."/>
            <person name="Woodwark C."/>
            <person name="Zdobnov E."/>
            <person name="Bork P."/>
            <person name="Suyama M."/>
            <person name="Torrents D."/>
            <person name="Alexandersson M."/>
            <person name="Trask B.J."/>
            <person name="Young J.M."/>
            <person name="Huang H."/>
            <person name="Wang H."/>
            <person name="Xing H."/>
            <person name="Daniels S."/>
            <person name="Gietzen D."/>
            <person name="Schmidt J."/>
            <person name="Stevens K."/>
            <person name="Vitt U."/>
            <person name="Wingrove J."/>
            <person name="Camara F."/>
            <person name="Mar Alba M."/>
            <person name="Abril J.F."/>
            <person name="Guigo R."/>
            <person name="Smit A."/>
            <person name="Dubchak I."/>
            <person name="Rubin E.M."/>
            <person name="Couronne O."/>
            <person name="Poliakov A."/>
            <person name="Huebner N."/>
            <person name="Ganten D."/>
            <person name="Goesele C."/>
            <person name="Hummel O."/>
            <person name="Kreitler T."/>
            <person name="Lee Y.-A."/>
            <person name="Monti J."/>
            <person name="Schulz H."/>
            <person name="Zimdahl H."/>
            <person name="Himmelbauer H."/>
            <person name="Lehrach H."/>
            <person name="Jacob H.J."/>
            <person name="Bromberg S."/>
            <person name="Gullings-Handley J."/>
            <person name="Jensen-Seaman M.I."/>
            <person name="Kwitek A.E."/>
            <person name="Lazar J."/>
            <person name="Pasko D."/>
            <person name="Tonellato P.J."/>
            <person name="Twigger S."/>
            <person name="Ponting C.P."/>
            <person name="Duarte J.M."/>
            <person name="Rice S."/>
            <person name="Goodstadt L."/>
            <person name="Beatson S.A."/>
            <person name="Emes R.D."/>
            <person name="Winter E.E."/>
            <person name="Webber C."/>
            <person name="Brandt P."/>
            <person name="Nyakatura G."/>
            <person name="Adetobi M."/>
            <person name="Chiaromonte F."/>
            <person name="Elnitski L."/>
            <person name="Eswara P."/>
            <person name="Hardison R.C."/>
            <person name="Hou M."/>
            <person name="Kolbe D."/>
            <person name="Makova K."/>
            <person name="Miller W."/>
            <person name="Nekrutenko A."/>
            <person name="Riemer C."/>
            <person name="Schwartz S."/>
            <person name="Taylor J."/>
            <person name="Yang S."/>
            <person name="Zhang Y."/>
            <person name="Lindpaintner K."/>
            <person name="Andrews T.D."/>
            <person name="Caccamo M."/>
            <person name="Clamp M."/>
            <person name="Clarke L."/>
            <person name="Curwen V."/>
            <person name="Durbin R.M."/>
            <person name="Eyras E."/>
            <person name="Searle S.M."/>
            <person name="Cooper G.M."/>
            <person name="Batzoglou S."/>
            <person name="Brudno M."/>
            <person name="Sidow A."/>
            <person name="Stone E.A."/>
            <person name="Payseur B.A."/>
            <person name="Bourque G."/>
            <person name="Lopez-Otin C."/>
            <person name="Puente X.S."/>
            <person name="Chakrabarti K."/>
            <person name="Chatterji S."/>
            <person name="Dewey C."/>
            <person name="Pachter L."/>
            <person name="Bray N."/>
            <person name="Yap V.B."/>
            <person name="Caspi A."/>
            <person name="Tesler G."/>
            <person name="Pevzner P.A."/>
            <person name="Haussler D."/>
            <person name="Roskin K.M."/>
            <person name="Baertsch R."/>
            <person name="Clawson H."/>
            <person name="Furey T.S."/>
            <person name="Hinrichs A.S."/>
            <person name="Karolchik D."/>
            <person name="Kent W.J."/>
            <person name="Rosenbloom K.R."/>
            <person name="Trumbower H."/>
            <person name="Weirauch M."/>
            <person name="Cooper D.N."/>
            <person name="Stenson P.D."/>
            <person name="Ma B."/>
            <person name="Brent M."/>
            <person name="Arumugam M."/>
            <person name="Shteynberg D."/>
            <person name="Copley R.R."/>
            <person name="Taylor M.S."/>
            <person name="Riethman H."/>
            <person name="Mudunuri U."/>
            <person name="Peterson J."/>
            <person name="Guyer M."/>
            <person name="Felsenfeld A."/>
            <person name="Old S."/>
            <person name="Mockrin S."/>
            <person name="Collins F.S."/>
        </authorList>
    </citation>
    <scope>NUCLEOTIDE SEQUENCE [LARGE SCALE GENOMIC DNA]</scope>
    <source>
        <strain>Brown Norway</strain>
    </source>
</reference>
<name>FND10_RAT</name>
<sequence length="225" mass="24494">MRAPPLLLLLAACAPPSGAAVDPTPPGWEPAPDAPWCPYKVLSEGPEAGGGRLCFRSPVRGFRCQTPGCVTLASAGGSLRAHVLRNRSVLLQWRLAPAEARRVRVFALNCSWRGTYTRFPCDRVLLGASCRDYLLPDVHDSVRYRLCLQPLPLPLRAELAAAPPELAECVEFTAEPAAMQEIVVAMTAVGGSICVMLVVICLLVAYITENLMHPTFRRPSLRRQP</sequence>
<accession>D4A2Q0</accession>
<organism>
    <name type="scientific">Rattus norvegicus</name>
    <name type="common">Rat</name>
    <dbReference type="NCBI Taxonomy" id="10116"/>
    <lineage>
        <taxon>Eukaryota</taxon>
        <taxon>Metazoa</taxon>
        <taxon>Chordata</taxon>
        <taxon>Craniata</taxon>
        <taxon>Vertebrata</taxon>
        <taxon>Euteleostomi</taxon>
        <taxon>Mammalia</taxon>
        <taxon>Eutheria</taxon>
        <taxon>Euarchontoglires</taxon>
        <taxon>Glires</taxon>
        <taxon>Rodentia</taxon>
        <taxon>Myomorpha</taxon>
        <taxon>Muroidea</taxon>
        <taxon>Muridae</taxon>
        <taxon>Murinae</taxon>
        <taxon>Rattus</taxon>
    </lineage>
</organism>
<comment type="subcellular location">
    <subcellularLocation>
        <location evidence="2">Membrane</location>
        <topology evidence="2">Single-pass type I membrane protein</topology>
    </subcellularLocation>
</comment>
<protein>
    <recommendedName>
        <fullName>Fibronectin type III domain-containing protein 10</fullName>
    </recommendedName>
</protein>
<proteinExistence type="inferred from homology"/>
<gene>
    <name type="primary">Fndc10</name>
</gene>
<keyword id="KW-0325">Glycoprotein</keyword>
<keyword id="KW-0472">Membrane</keyword>
<keyword id="KW-1185">Reference proteome</keyword>
<keyword id="KW-0732">Signal</keyword>
<keyword id="KW-0812">Transmembrane</keyword>
<keyword id="KW-1133">Transmembrane helix</keyword>
<evidence type="ECO:0000255" key="1"/>
<evidence type="ECO:0000305" key="2"/>